<evidence type="ECO:0000250" key="1">
    <source>
        <dbReference type="UniProtKB" id="P25382"/>
    </source>
</evidence>
<evidence type="ECO:0000250" key="2">
    <source>
        <dbReference type="UniProtKB" id="Q9VPR4"/>
    </source>
</evidence>
<evidence type="ECO:0000255" key="3"/>
<evidence type="ECO:0000269" key="4">
    <source>
    </source>
</evidence>
<evidence type="ECO:0000305" key="5"/>
<evidence type="ECO:0000312" key="6">
    <source>
        <dbReference type="PomBase" id="SPCC18.05c"/>
    </source>
</evidence>
<reference key="1">
    <citation type="journal article" date="2002" name="Nature">
        <title>The genome sequence of Schizosaccharomyces pombe.</title>
        <authorList>
            <person name="Wood V."/>
            <person name="Gwilliam R."/>
            <person name="Rajandream M.A."/>
            <person name="Lyne M.H."/>
            <person name="Lyne R."/>
            <person name="Stewart A."/>
            <person name="Sgouros J.G."/>
            <person name="Peat N."/>
            <person name="Hayles J."/>
            <person name="Baker S.G."/>
            <person name="Basham D."/>
            <person name="Bowman S."/>
            <person name="Brooks K."/>
            <person name="Brown D."/>
            <person name="Brown S."/>
            <person name="Chillingworth T."/>
            <person name="Churcher C.M."/>
            <person name="Collins M."/>
            <person name="Connor R."/>
            <person name="Cronin A."/>
            <person name="Davis P."/>
            <person name="Feltwell T."/>
            <person name="Fraser A."/>
            <person name="Gentles S."/>
            <person name="Goble A."/>
            <person name="Hamlin N."/>
            <person name="Harris D.E."/>
            <person name="Hidalgo J."/>
            <person name="Hodgson G."/>
            <person name="Holroyd S."/>
            <person name="Hornsby T."/>
            <person name="Howarth S."/>
            <person name="Huckle E.J."/>
            <person name="Hunt S."/>
            <person name="Jagels K."/>
            <person name="James K.D."/>
            <person name="Jones L."/>
            <person name="Jones M."/>
            <person name="Leather S."/>
            <person name="McDonald S."/>
            <person name="McLean J."/>
            <person name="Mooney P."/>
            <person name="Moule S."/>
            <person name="Mungall K.L."/>
            <person name="Murphy L.D."/>
            <person name="Niblett D."/>
            <person name="Odell C."/>
            <person name="Oliver K."/>
            <person name="O'Neil S."/>
            <person name="Pearson D."/>
            <person name="Quail M.A."/>
            <person name="Rabbinowitsch E."/>
            <person name="Rutherford K.M."/>
            <person name="Rutter S."/>
            <person name="Saunders D."/>
            <person name="Seeger K."/>
            <person name="Sharp S."/>
            <person name="Skelton J."/>
            <person name="Simmonds M.N."/>
            <person name="Squares R."/>
            <person name="Squares S."/>
            <person name="Stevens K."/>
            <person name="Taylor K."/>
            <person name="Taylor R.G."/>
            <person name="Tivey A."/>
            <person name="Walsh S.V."/>
            <person name="Warren T."/>
            <person name="Whitehead S."/>
            <person name="Woodward J.R."/>
            <person name="Volckaert G."/>
            <person name="Aert R."/>
            <person name="Robben J."/>
            <person name="Grymonprez B."/>
            <person name="Weltjens I."/>
            <person name="Vanstreels E."/>
            <person name="Rieger M."/>
            <person name="Schaefer M."/>
            <person name="Mueller-Auer S."/>
            <person name="Gabel C."/>
            <person name="Fuchs M."/>
            <person name="Duesterhoeft A."/>
            <person name="Fritzc C."/>
            <person name="Holzer E."/>
            <person name="Moestl D."/>
            <person name="Hilbert H."/>
            <person name="Borzym K."/>
            <person name="Langer I."/>
            <person name="Beck A."/>
            <person name="Lehrach H."/>
            <person name="Reinhardt R."/>
            <person name="Pohl T.M."/>
            <person name="Eger P."/>
            <person name="Zimmermann W."/>
            <person name="Wedler H."/>
            <person name="Wambutt R."/>
            <person name="Purnelle B."/>
            <person name="Goffeau A."/>
            <person name="Cadieu E."/>
            <person name="Dreano S."/>
            <person name="Gloux S."/>
            <person name="Lelaure V."/>
            <person name="Mottier S."/>
            <person name="Galibert F."/>
            <person name="Aves S.J."/>
            <person name="Xiang Z."/>
            <person name="Hunt C."/>
            <person name="Moore K."/>
            <person name="Hurst S.M."/>
            <person name="Lucas M."/>
            <person name="Rochet M."/>
            <person name="Gaillardin C."/>
            <person name="Tallada V.A."/>
            <person name="Garzon A."/>
            <person name="Thode G."/>
            <person name="Daga R.R."/>
            <person name="Cruzado L."/>
            <person name="Jimenez J."/>
            <person name="Sanchez M."/>
            <person name="del Rey F."/>
            <person name="Benito J."/>
            <person name="Dominguez A."/>
            <person name="Revuelta J.L."/>
            <person name="Moreno S."/>
            <person name="Armstrong J."/>
            <person name="Forsburg S.L."/>
            <person name="Cerutti L."/>
            <person name="Lowe T."/>
            <person name="McCombie W.R."/>
            <person name="Paulsen I."/>
            <person name="Potashkin J."/>
            <person name="Shpakovski G.V."/>
            <person name="Ussery D."/>
            <person name="Barrell B.G."/>
            <person name="Nurse P."/>
        </authorList>
    </citation>
    <scope>NUCLEOTIDE SEQUENCE [LARGE SCALE GENOMIC DNA]</scope>
    <source>
        <strain>972 / ATCC 24843</strain>
    </source>
</reference>
<reference key="2">
    <citation type="journal article" date="2006" name="Nat. Biotechnol.">
        <title>ORFeome cloning and global analysis of protein localization in the fission yeast Schizosaccharomyces pombe.</title>
        <authorList>
            <person name="Matsuyama A."/>
            <person name="Arai R."/>
            <person name="Yashiroda Y."/>
            <person name="Shirai A."/>
            <person name="Kamata A."/>
            <person name="Sekido S."/>
            <person name="Kobayashi Y."/>
            <person name="Hashimoto A."/>
            <person name="Hamamoto M."/>
            <person name="Hiraoka Y."/>
            <person name="Horinouchi S."/>
            <person name="Yoshida M."/>
        </authorList>
    </citation>
    <scope>SUBCELLULAR LOCATION [LARGE SCALE ANALYSIS]</scope>
</reference>
<feature type="chain" id="PRO_0000316570" description="Ribosome assembly protein 4">
    <location>
        <begin position="1"/>
        <end position="502"/>
    </location>
</feature>
<feature type="repeat" description="WD 1" evidence="3">
    <location>
        <begin position="132"/>
        <end position="172"/>
    </location>
</feature>
<feature type="repeat" description="WD 2" evidence="3">
    <location>
        <begin position="175"/>
        <end position="214"/>
    </location>
</feature>
<feature type="repeat" description="WD 3" evidence="3">
    <location>
        <begin position="218"/>
        <end position="264"/>
    </location>
</feature>
<feature type="repeat" description="WD 4" evidence="3">
    <location>
        <begin position="267"/>
        <end position="307"/>
    </location>
</feature>
<feature type="repeat" description="WD 5" evidence="3">
    <location>
        <begin position="344"/>
        <end position="383"/>
    </location>
</feature>
<feature type="repeat" description="WD 6" evidence="3">
    <location>
        <begin position="387"/>
        <end position="426"/>
    </location>
</feature>
<feature type="repeat" description="WD 7" evidence="3">
    <location>
        <begin position="429"/>
        <end position="468"/>
    </location>
</feature>
<feature type="repeat" description="WD 8" evidence="3">
    <location>
        <begin position="471"/>
        <end position="502"/>
    </location>
</feature>
<feature type="region of interest" description="Ubiquitin-like (UBL) domain" evidence="1">
    <location>
        <begin position="28"/>
        <end position="116"/>
    </location>
</feature>
<dbReference type="EMBL" id="CU329672">
    <property type="protein sequence ID" value="CAA21419.1"/>
    <property type="molecule type" value="Genomic_DNA"/>
</dbReference>
<dbReference type="PIR" id="T41148">
    <property type="entry name" value="T41148"/>
</dbReference>
<dbReference type="RefSeq" id="NP_588384.1">
    <property type="nucleotide sequence ID" value="NM_001023375.2"/>
</dbReference>
<dbReference type="SMR" id="O74855"/>
<dbReference type="BioGRID" id="275946">
    <property type="interactions" value="4"/>
</dbReference>
<dbReference type="FunCoup" id="O74855">
    <property type="interactions" value="534"/>
</dbReference>
<dbReference type="STRING" id="284812.O74855"/>
<dbReference type="iPTMnet" id="O74855"/>
<dbReference type="PaxDb" id="4896-SPCC18.05c.1"/>
<dbReference type="EnsemblFungi" id="SPCC18.05c.1">
    <property type="protein sequence ID" value="SPCC18.05c.1:pep"/>
    <property type="gene ID" value="SPCC18.05c"/>
</dbReference>
<dbReference type="GeneID" id="2539380"/>
<dbReference type="KEGG" id="spo:2539380"/>
<dbReference type="PomBase" id="SPCC18.05c">
    <property type="gene designation" value="rsa4"/>
</dbReference>
<dbReference type="VEuPathDB" id="FungiDB:SPCC18.05c"/>
<dbReference type="eggNOG" id="KOG0271">
    <property type="taxonomic scope" value="Eukaryota"/>
</dbReference>
<dbReference type="HOGENOM" id="CLU_000288_57_16_1"/>
<dbReference type="InParanoid" id="O74855"/>
<dbReference type="OMA" id="AWEPYHR"/>
<dbReference type="PhylomeDB" id="O74855"/>
<dbReference type="PRO" id="PR:O74855"/>
<dbReference type="Proteomes" id="UP000002485">
    <property type="component" value="Chromosome III"/>
</dbReference>
<dbReference type="GO" id="GO:0005730">
    <property type="term" value="C:nucleolus"/>
    <property type="evidence" value="ECO:0000318"/>
    <property type="project" value="GO_Central"/>
</dbReference>
<dbReference type="GO" id="GO:0005634">
    <property type="term" value="C:nucleus"/>
    <property type="evidence" value="ECO:0007005"/>
    <property type="project" value="PomBase"/>
</dbReference>
<dbReference type="GO" id="GO:0000027">
    <property type="term" value="P:ribosomal large subunit assembly"/>
    <property type="evidence" value="ECO:0000318"/>
    <property type="project" value="GO_Central"/>
</dbReference>
<dbReference type="CDD" id="cd00200">
    <property type="entry name" value="WD40"/>
    <property type="match status" value="1"/>
</dbReference>
<dbReference type="FunFam" id="2.130.10.10:FF:000464">
    <property type="entry name" value="Ribosome assembly protein 4"/>
    <property type="match status" value="1"/>
</dbReference>
<dbReference type="Gene3D" id="2.130.10.10">
    <property type="entry name" value="YVTN repeat-like/Quinoprotein amine dehydrogenase"/>
    <property type="match status" value="1"/>
</dbReference>
<dbReference type="InterPro" id="IPR020472">
    <property type="entry name" value="G-protein_beta_WD-40_rep"/>
</dbReference>
<dbReference type="InterPro" id="IPR001632">
    <property type="entry name" value="Gprotein_B"/>
</dbReference>
<dbReference type="InterPro" id="IPR012972">
    <property type="entry name" value="NLE"/>
</dbReference>
<dbReference type="InterPro" id="IPR015943">
    <property type="entry name" value="WD40/YVTN_repeat-like_dom_sf"/>
</dbReference>
<dbReference type="InterPro" id="IPR019775">
    <property type="entry name" value="WD40_repeat_CS"/>
</dbReference>
<dbReference type="InterPro" id="IPR036322">
    <property type="entry name" value="WD40_repeat_dom_sf"/>
</dbReference>
<dbReference type="InterPro" id="IPR001680">
    <property type="entry name" value="WD40_rpt"/>
</dbReference>
<dbReference type="PANTHER" id="PTHR19848:SF0">
    <property type="entry name" value="NOTCHLESS PROTEIN HOMOLOG 1"/>
    <property type="match status" value="1"/>
</dbReference>
<dbReference type="PANTHER" id="PTHR19848">
    <property type="entry name" value="WD40 REPEAT PROTEIN"/>
    <property type="match status" value="1"/>
</dbReference>
<dbReference type="Pfam" id="PF08154">
    <property type="entry name" value="NLE"/>
    <property type="match status" value="1"/>
</dbReference>
<dbReference type="Pfam" id="PF00400">
    <property type="entry name" value="WD40"/>
    <property type="match status" value="8"/>
</dbReference>
<dbReference type="PRINTS" id="PR00319">
    <property type="entry name" value="GPROTEINB"/>
</dbReference>
<dbReference type="PRINTS" id="PR00320">
    <property type="entry name" value="GPROTEINBRPT"/>
</dbReference>
<dbReference type="SMART" id="SM00320">
    <property type="entry name" value="WD40"/>
    <property type="match status" value="8"/>
</dbReference>
<dbReference type="SUPFAM" id="SSF117289">
    <property type="entry name" value="Nucleoporin domain"/>
    <property type="match status" value="1"/>
</dbReference>
<dbReference type="SUPFAM" id="SSF50978">
    <property type="entry name" value="WD40 repeat-like"/>
    <property type="match status" value="1"/>
</dbReference>
<dbReference type="PROSITE" id="PS00678">
    <property type="entry name" value="WD_REPEATS_1"/>
    <property type="match status" value="5"/>
</dbReference>
<dbReference type="PROSITE" id="PS50082">
    <property type="entry name" value="WD_REPEATS_2"/>
    <property type="match status" value="7"/>
</dbReference>
<dbReference type="PROSITE" id="PS50294">
    <property type="entry name" value="WD_REPEATS_REGION"/>
    <property type="match status" value="1"/>
</dbReference>
<comment type="function">
    <text evidence="1">Involved in ribosome biogenesis. Required for processing and efficient intra-nuclear transport of pre-60S ribosomal subunits. Interacts with the AAA-ATPase Midasin, which is essential for the ATP-dependent dissociation of a group of nonribosomal factors from the pre-60S particle.</text>
</comment>
<comment type="subunit">
    <text evidence="1">Associates with the pre-60S ribosomal particle. Interacts (via WD repeats) with uL18 (rpl501/rpl502). Interacts (via UBL domain) with mdn1 (via VWFA/MIDAS domain). Interacts (via WD repeats) with nsa2.</text>
</comment>
<comment type="subcellular location">
    <subcellularLocation>
        <location evidence="4">Nucleus</location>
        <location evidence="4">Nucleolus</location>
    </subcellularLocation>
</comment>
<comment type="similarity">
    <text evidence="5">Belongs to the NLE1/RSA4 family.</text>
</comment>
<keyword id="KW-0539">Nucleus</keyword>
<keyword id="KW-1185">Reference proteome</keyword>
<keyword id="KW-0677">Repeat</keyword>
<keyword id="KW-0690">Ribosome biogenesis</keyword>
<keyword id="KW-0853">WD repeat</keyword>
<protein>
    <recommendedName>
        <fullName evidence="1">Ribosome assembly protein 4</fullName>
    </recommendedName>
    <alternativeName>
        <fullName evidence="2">Notchless protein homolog 1</fullName>
    </alternativeName>
    <alternativeName>
        <fullName evidence="2">Ribosome biogenesis factor rsa4</fullName>
    </alternativeName>
</protein>
<gene>
    <name type="primary">rsa4</name>
    <name evidence="6" type="ORF">SPCC18.05c</name>
</gene>
<organism>
    <name type="scientific">Schizosaccharomyces pombe (strain 972 / ATCC 24843)</name>
    <name type="common">Fission yeast</name>
    <dbReference type="NCBI Taxonomy" id="284812"/>
    <lineage>
        <taxon>Eukaryota</taxon>
        <taxon>Fungi</taxon>
        <taxon>Dikarya</taxon>
        <taxon>Ascomycota</taxon>
        <taxon>Taphrinomycotina</taxon>
        <taxon>Schizosaccharomycetes</taxon>
        <taxon>Schizosaccharomycetales</taxon>
        <taxon>Schizosaccharomycetaceae</taxon>
        <taxon>Schizosaccharomyces</taxon>
    </lineage>
</organism>
<sequence length="502" mass="56003">MATLLPPKSKRQKKESLNPTTIEIPEKFPLVNVQFRASDDSNELASLLVPGNSSVRQLEALLNQLLENSDDPVPYNFALHHEDETIEIQDNLYTSVFHNGLMKTEDHLTLLYTPQAVFRVRAVTRCTASMNGHDGTIISAQFSPSTSSRLVTGSGDFTARLWDCDTQTPIATMKGHTNWVSCVAWAPDASIIATGSMDNTIRFWDPKKGSPIGDALRRHTKPIMALCWQPLHLAPDSGPYLLASGSKDNTVRIWNVKLRTLLFTLSGHTAPITCVRWGGQNWIYSSSYDKTIRIWDAKDGKCLHILKGHAARVNHLSLSTEHVLRSGAYDHTDFKPKSFSDERRKAKERYEACLKQSGERLVSASDDLQLILWDPQKSTKPITKMHGHQKVVNHASFSPDGRCIATASFDSSVRLWDGKTGKFLATLRGHVAAVYQCAWSTDSRLLVSSSQDTTLKVWDVRSKKMKFDLPGHEDQVFAVDWSPDGQRVASGGADKAVRIWSH</sequence>
<proteinExistence type="inferred from homology"/>
<accession>O74855</accession>
<name>NLE1_SCHPO</name>